<dbReference type="EMBL" id="CP001069">
    <property type="protein sequence ID" value="ACD29648.1"/>
    <property type="molecule type" value="Genomic_DNA"/>
</dbReference>
<dbReference type="STRING" id="402626.Rpic_4558"/>
<dbReference type="KEGG" id="rpi:Rpic_4558"/>
<dbReference type="eggNOG" id="COG3002">
    <property type="taxonomic scope" value="Bacteria"/>
</dbReference>
<dbReference type="HOGENOM" id="CLU_009885_1_0_4"/>
<dbReference type="GO" id="GO:0005886">
    <property type="term" value="C:plasma membrane"/>
    <property type="evidence" value="ECO:0007669"/>
    <property type="project" value="UniProtKB-SubCell"/>
</dbReference>
<dbReference type="GO" id="GO:0008270">
    <property type="term" value="F:zinc ion binding"/>
    <property type="evidence" value="ECO:0007669"/>
    <property type="project" value="UniProtKB-UniRule"/>
</dbReference>
<dbReference type="HAMAP" id="MF_01871">
    <property type="entry name" value="DabA"/>
    <property type="match status" value="1"/>
</dbReference>
<dbReference type="InterPro" id="IPR018752">
    <property type="entry name" value="DabA"/>
</dbReference>
<dbReference type="PANTHER" id="PTHR38344:SF1">
    <property type="entry name" value="INORGANIC CARBON TRANSPORTER SUBUNIT DABA-RELATED"/>
    <property type="match status" value="1"/>
</dbReference>
<dbReference type="PANTHER" id="PTHR38344">
    <property type="entry name" value="UPF0753 PROTEIN AQ_863"/>
    <property type="match status" value="1"/>
</dbReference>
<dbReference type="Pfam" id="PF10070">
    <property type="entry name" value="DabA"/>
    <property type="match status" value="1"/>
</dbReference>
<reference key="1">
    <citation type="submission" date="2008-05" db="EMBL/GenBank/DDBJ databases">
        <title>Complete sequence of chromosome 2 of Ralstonia pickettii 12J.</title>
        <authorList>
            <person name="Lucas S."/>
            <person name="Copeland A."/>
            <person name="Lapidus A."/>
            <person name="Glavina del Rio T."/>
            <person name="Dalin E."/>
            <person name="Tice H."/>
            <person name="Bruce D."/>
            <person name="Goodwin L."/>
            <person name="Pitluck S."/>
            <person name="Meincke L."/>
            <person name="Brettin T."/>
            <person name="Detter J.C."/>
            <person name="Han C."/>
            <person name="Kuske C.R."/>
            <person name="Schmutz J."/>
            <person name="Larimer F."/>
            <person name="Land M."/>
            <person name="Hauser L."/>
            <person name="Kyrpides N."/>
            <person name="Mikhailova N."/>
            <person name="Marsh T."/>
            <person name="Richardson P."/>
        </authorList>
    </citation>
    <scope>NUCLEOTIDE SEQUENCE [LARGE SCALE GENOMIC DNA]</scope>
    <source>
        <strain>12J</strain>
    </source>
</reference>
<name>DABA_RALPJ</name>
<gene>
    <name evidence="1" type="primary">dabA</name>
    <name type="ordered locus">Rpic_4558</name>
</gene>
<sequence length="860" mass="93974">MTTTSLGADAAHTHAMVPSAIPPEGSDAAGPDDTLMQQMQAACAQACRAIAPAWPLDRAIAVNPHWGRVDMPVRRVAARMAVLGGIQVFPTRRSQQQAWVAGRITPADLADALAQLPAARAAGLTEAKCVEALRRHELPPRLPLLIDVLDNDPQRHTRLSWRQAITHQVSQTCAAYFDVHQADWQPERADGLYGFWRDTLQHDHGIGLLMGLPDLGRRLDALPATPLDAEHWALNQLGLPQPVWADYLEAVLLTVNGWASWCAYLGWQAAQEGREDPHLRDLLAIRLAWGAIVQECRDDASTRMAFAALQAEWQQAPSALAEAEAALLVDEVWQLALEAGYQRQLAHRLAGAGALPPVPQDIEVQAAFCIDVRSEPLRRALECVWPAVQTIGFAGFFGLPVAYTPLGTAARRPQLPGLLAPTMEVSDRIDAAQGPDGMPDPAAERAAERARRHRLGASAQVDGASRWPSAAFSYVEVAGVGYLGKLWRWLRPSTEARSRADLTGLPSRYRAVCRPHLHAESVETKAALAARVLRAMGLAEHLAPLVLFVGHGSQTSNNAHAAALDCGACCGQTGEVNARSLALLLNEPPVRAALQAHGITVPEDTVFAAALHNTTTDEIEGFDLDRLPPAARARWDHLQSVLKHASDQVRRERAPSLGLDPRAPHDDLLTQLRRRANDGAQTRPEWGLAGNAAFVIAPRHRTQGVVLDGRSFLHDYDASRDHDGSVLELLMTAPMLVTHWINWQYHASMCDPVHLGSGNKLLHNVVGGSIGVFEGNGGDLRIGLSRQSLHDGQRWIHEPLRLTVLIDAPETAIERVVDKHPIVRQLVDNGWLHLWRFGPQDLQRYAAGQWRPLTSRHATC</sequence>
<evidence type="ECO:0000255" key="1">
    <source>
        <dbReference type="HAMAP-Rule" id="MF_01871"/>
    </source>
</evidence>
<evidence type="ECO:0000256" key="2">
    <source>
        <dbReference type="SAM" id="MobiDB-lite"/>
    </source>
</evidence>
<protein>
    <recommendedName>
        <fullName evidence="1">Probable inorganic carbon transporter subunit DabA</fullName>
    </recommendedName>
</protein>
<keyword id="KW-0997">Cell inner membrane</keyword>
<keyword id="KW-1003">Cell membrane</keyword>
<keyword id="KW-0472">Membrane</keyword>
<keyword id="KW-0479">Metal-binding</keyword>
<keyword id="KW-0813">Transport</keyword>
<keyword id="KW-0862">Zinc</keyword>
<feature type="chain" id="PRO_0000387288" description="Probable inorganic carbon transporter subunit DabA">
    <location>
        <begin position="1"/>
        <end position="860"/>
    </location>
</feature>
<feature type="region of interest" description="Disordered" evidence="2">
    <location>
        <begin position="1"/>
        <end position="32"/>
    </location>
</feature>
<feature type="binding site" evidence="1">
    <location>
        <position position="369"/>
    </location>
    <ligand>
        <name>Zn(2+)</name>
        <dbReference type="ChEBI" id="CHEBI:29105"/>
    </ligand>
</feature>
<feature type="binding site" evidence="1">
    <location>
        <position position="371"/>
    </location>
    <ligand>
        <name>Zn(2+)</name>
        <dbReference type="ChEBI" id="CHEBI:29105"/>
    </ligand>
</feature>
<feature type="binding site" evidence="1">
    <location>
        <position position="551"/>
    </location>
    <ligand>
        <name>Zn(2+)</name>
        <dbReference type="ChEBI" id="CHEBI:29105"/>
    </ligand>
</feature>
<feature type="binding site" evidence="1">
    <location>
        <position position="566"/>
    </location>
    <ligand>
        <name>Zn(2+)</name>
        <dbReference type="ChEBI" id="CHEBI:29105"/>
    </ligand>
</feature>
<organism>
    <name type="scientific">Ralstonia pickettii (strain 12J)</name>
    <dbReference type="NCBI Taxonomy" id="402626"/>
    <lineage>
        <taxon>Bacteria</taxon>
        <taxon>Pseudomonadati</taxon>
        <taxon>Pseudomonadota</taxon>
        <taxon>Betaproteobacteria</taxon>
        <taxon>Burkholderiales</taxon>
        <taxon>Burkholderiaceae</taxon>
        <taxon>Ralstonia</taxon>
    </lineage>
</organism>
<accession>B2UJ97</accession>
<comment type="function">
    <text evidence="1">Part of an energy-coupled inorganic carbon pump.</text>
</comment>
<comment type="cofactor">
    <cofactor evidence="1">
        <name>Zn(2+)</name>
        <dbReference type="ChEBI" id="CHEBI:29105"/>
    </cofactor>
</comment>
<comment type="subunit">
    <text evidence="1">Forms a complex with DabB.</text>
</comment>
<comment type="subcellular location">
    <subcellularLocation>
        <location evidence="1">Cell inner membrane</location>
        <topology evidence="1">Peripheral membrane protein</topology>
    </subcellularLocation>
</comment>
<comment type="similarity">
    <text evidence="1">Belongs to the inorganic carbon transporter (TC 9.A.2) DabA family.</text>
</comment>
<proteinExistence type="inferred from homology"/>